<reference key="1">
    <citation type="journal article" date="2003" name="Proc. Natl. Acad. Sci. U.S.A.">
        <title>The complete genome sequence of Chromobacterium violaceum reveals remarkable and exploitable bacterial adaptability.</title>
        <authorList>
            <person name="Vasconcelos A.T.R."/>
            <person name="de Almeida D.F."/>
            <person name="Hungria M."/>
            <person name="Guimaraes C.T."/>
            <person name="Antonio R.V."/>
            <person name="Almeida F.C."/>
            <person name="de Almeida L.G.P."/>
            <person name="de Almeida R."/>
            <person name="Alves-Gomes J.A."/>
            <person name="Andrade E.M."/>
            <person name="Araripe J."/>
            <person name="de Araujo M.F.F."/>
            <person name="Astolfi-Filho S."/>
            <person name="Azevedo V."/>
            <person name="Baptista A.J."/>
            <person name="Bataus L.A.M."/>
            <person name="Batista J.S."/>
            <person name="Belo A."/>
            <person name="van den Berg C."/>
            <person name="Bogo M."/>
            <person name="Bonatto S."/>
            <person name="Bordignon J."/>
            <person name="Brigido M.M."/>
            <person name="Brito C.A."/>
            <person name="Brocchi M."/>
            <person name="Burity H.A."/>
            <person name="Camargo A.A."/>
            <person name="Cardoso D.D.P."/>
            <person name="Carneiro N.P."/>
            <person name="Carraro D.M."/>
            <person name="Carvalho C.M.B."/>
            <person name="Cascardo J.C.M."/>
            <person name="Cavada B.S."/>
            <person name="Chueire L.M.O."/>
            <person name="Creczynski-Pasa T.B."/>
            <person name="Cunha-Junior N.C."/>
            <person name="Fagundes N."/>
            <person name="Falcao C.L."/>
            <person name="Fantinatti F."/>
            <person name="Farias I.P."/>
            <person name="Felipe M.S.S."/>
            <person name="Ferrari L.P."/>
            <person name="Ferro J.A."/>
            <person name="Ferro M.I.T."/>
            <person name="Franco G.R."/>
            <person name="Freitas N.S.A."/>
            <person name="Furlan L.R."/>
            <person name="Gazzinelli R.T."/>
            <person name="Gomes E.A."/>
            <person name="Goncalves P.R."/>
            <person name="Grangeiro T.B."/>
            <person name="Grattapaglia D."/>
            <person name="Grisard E.C."/>
            <person name="Hanna E.S."/>
            <person name="Jardim S.N."/>
            <person name="Laurino J."/>
            <person name="Leoi L.C.T."/>
            <person name="Lima L.F.A."/>
            <person name="Loureiro M.F."/>
            <person name="Lyra M.C.C.P."/>
            <person name="Madeira H.M.F."/>
            <person name="Manfio G.P."/>
            <person name="Maranhao A.Q."/>
            <person name="Martins W.S."/>
            <person name="di Mauro S.M.Z."/>
            <person name="de Medeiros S.R.B."/>
            <person name="Meissner R.V."/>
            <person name="Moreira M.A.M."/>
            <person name="Nascimento F.F."/>
            <person name="Nicolas M.F."/>
            <person name="Oliveira J.G."/>
            <person name="Oliveira S.C."/>
            <person name="Paixao R.F.C."/>
            <person name="Parente J.A."/>
            <person name="Pedrosa F.O."/>
            <person name="Pena S.D.J."/>
            <person name="Pereira J.O."/>
            <person name="Pereira M."/>
            <person name="Pinto L.S.R.C."/>
            <person name="Pinto L.S."/>
            <person name="Porto J.I.R."/>
            <person name="Potrich D.P."/>
            <person name="Ramalho-Neto C.E."/>
            <person name="Reis A.M.M."/>
            <person name="Rigo L.U."/>
            <person name="Rondinelli E."/>
            <person name="Santos E.B.P."/>
            <person name="Santos F.R."/>
            <person name="Schneider M.P.C."/>
            <person name="Seuanez H.N."/>
            <person name="Silva A.M.R."/>
            <person name="da Silva A.L.C."/>
            <person name="Silva D.W."/>
            <person name="Silva R."/>
            <person name="Simoes I.C."/>
            <person name="Simon D."/>
            <person name="Soares C.M.A."/>
            <person name="Soares R.B.A."/>
            <person name="Souza E.M."/>
            <person name="Souza K.R.L."/>
            <person name="Souza R.C."/>
            <person name="Steffens M.B.R."/>
            <person name="Steindel M."/>
            <person name="Teixeira S.R."/>
            <person name="Urmenyi T."/>
            <person name="Vettore A."/>
            <person name="Wassem R."/>
            <person name="Zaha A."/>
            <person name="Simpson A.J.G."/>
        </authorList>
    </citation>
    <scope>NUCLEOTIDE SEQUENCE [LARGE SCALE GENOMIC DNA]</scope>
    <source>
        <strain>ATCC 12472 / DSM 30191 / JCM 1249 / CCUG 213 / NBRC 12614 / NCIMB 9131 / NCTC 9757 / MK</strain>
    </source>
</reference>
<dbReference type="EMBL" id="AE016825">
    <property type="protein sequence ID" value="AAQ58766.1"/>
    <property type="status" value="ALT_INIT"/>
    <property type="molecule type" value="Genomic_DNA"/>
</dbReference>
<dbReference type="RefSeq" id="WP_043595559.1">
    <property type="nucleotide sequence ID" value="NC_005085.1"/>
</dbReference>
<dbReference type="SMR" id="Q7NZ31"/>
<dbReference type="STRING" id="243365.CV_1091"/>
<dbReference type="KEGG" id="cvi:CV_1091"/>
<dbReference type="eggNOG" id="COG1076">
    <property type="taxonomic scope" value="Bacteria"/>
</dbReference>
<dbReference type="HOGENOM" id="CLU_068529_2_1_4"/>
<dbReference type="OrthoDB" id="287587at2"/>
<dbReference type="Proteomes" id="UP000001424">
    <property type="component" value="Chromosome"/>
</dbReference>
<dbReference type="GO" id="GO:1990230">
    <property type="term" value="C:iron-sulfur cluster transfer complex"/>
    <property type="evidence" value="ECO:0007669"/>
    <property type="project" value="TreeGrafter"/>
</dbReference>
<dbReference type="GO" id="GO:0001671">
    <property type="term" value="F:ATPase activator activity"/>
    <property type="evidence" value="ECO:0007669"/>
    <property type="project" value="InterPro"/>
</dbReference>
<dbReference type="GO" id="GO:0051087">
    <property type="term" value="F:protein-folding chaperone binding"/>
    <property type="evidence" value="ECO:0007669"/>
    <property type="project" value="InterPro"/>
</dbReference>
<dbReference type="GO" id="GO:0044571">
    <property type="term" value="P:[2Fe-2S] cluster assembly"/>
    <property type="evidence" value="ECO:0007669"/>
    <property type="project" value="InterPro"/>
</dbReference>
<dbReference type="GO" id="GO:0051259">
    <property type="term" value="P:protein complex oligomerization"/>
    <property type="evidence" value="ECO:0007669"/>
    <property type="project" value="InterPro"/>
</dbReference>
<dbReference type="GO" id="GO:0006457">
    <property type="term" value="P:protein folding"/>
    <property type="evidence" value="ECO:0007669"/>
    <property type="project" value="UniProtKB-UniRule"/>
</dbReference>
<dbReference type="Gene3D" id="1.10.287.110">
    <property type="entry name" value="DnaJ domain"/>
    <property type="match status" value="1"/>
</dbReference>
<dbReference type="Gene3D" id="1.20.1280.20">
    <property type="entry name" value="HscB, C-terminal domain"/>
    <property type="match status" value="1"/>
</dbReference>
<dbReference type="HAMAP" id="MF_00682">
    <property type="entry name" value="HscB"/>
    <property type="match status" value="1"/>
</dbReference>
<dbReference type="InterPro" id="IPR001623">
    <property type="entry name" value="DnaJ_domain"/>
</dbReference>
<dbReference type="InterPro" id="IPR004640">
    <property type="entry name" value="HscB"/>
</dbReference>
<dbReference type="InterPro" id="IPR036386">
    <property type="entry name" value="HscB_C_sf"/>
</dbReference>
<dbReference type="InterPro" id="IPR009073">
    <property type="entry name" value="HscB_oligo_C"/>
</dbReference>
<dbReference type="InterPro" id="IPR036869">
    <property type="entry name" value="J_dom_sf"/>
</dbReference>
<dbReference type="NCBIfam" id="TIGR00714">
    <property type="entry name" value="hscB"/>
    <property type="match status" value="1"/>
</dbReference>
<dbReference type="NCBIfam" id="NF002935">
    <property type="entry name" value="PRK03578.1"/>
    <property type="match status" value="1"/>
</dbReference>
<dbReference type="PANTHER" id="PTHR14021">
    <property type="entry name" value="IRON-SULFUR CLUSTER CO-CHAPERONE PROTEIN HSCB"/>
    <property type="match status" value="1"/>
</dbReference>
<dbReference type="PANTHER" id="PTHR14021:SF15">
    <property type="entry name" value="IRON-SULFUR CLUSTER CO-CHAPERONE PROTEIN HSCB"/>
    <property type="match status" value="1"/>
</dbReference>
<dbReference type="Pfam" id="PF07743">
    <property type="entry name" value="HSCB_C"/>
    <property type="match status" value="1"/>
</dbReference>
<dbReference type="SMART" id="SM00271">
    <property type="entry name" value="DnaJ"/>
    <property type="match status" value="1"/>
</dbReference>
<dbReference type="SUPFAM" id="SSF46565">
    <property type="entry name" value="Chaperone J-domain"/>
    <property type="match status" value="1"/>
</dbReference>
<dbReference type="SUPFAM" id="SSF47144">
    <property type="entry name" value="HSC20 (HSCB), C-terminal oligomerisation domain"/>
    <property type="match status" value="1"/>
</dbReference>
<dbReference type="PROSITE" id="PS50076">
    <property type="entry name" value="DNAJ_2"/>
    <property type="match status" value="1"/>
</dbReference>
<evidence type="ECO:0000255" key="1">
    <source>
        <dbReference type="HAMAP-Rule" id="MF_00682"/>
    </source>
</evidence>
<evidence type="ECO:0000305" key="2"/>
<gene>
    <name evidence="1" type="primary">hscB</name>
    <name type="ordered locus">CV_1091</name>
</gene>
<comment type="function">
    <text evidence="1">Co-chaperone involved in the maturation of iron-sulfur cluster-containing proteins. Seems to help targeting proteins to be folded toward HscA.</text>
</comment>
<comment type="subunit">
    <text evidence="1">Interacts with HscA and stimulates its ATPase activity.</text>
</comment>
<comment type="similarity">
    <text evidence="1">Belongs to the HscB family.</text>
</comment>
<comment type="sequence caution" evidence="2">
    <conflict type="erroneous initiation">
        <sequence resource="EMBL-CDS" id="AAQ58766"/>
    </conflict>
</comment>
<feature type="chain" id="PRO_0000070965" description="Co-chaperone protein HscB homolog">
    <location>
        <begin position="1"/>
        <end position="175"/>
    </location>
</feature>
<feature type="domain" description="J" evidence="1">
    <location>
        <begin position="8"/>
        <end position="80"/>
    </location>
</feature>
<protein>
    <recommendedName>
        <fullName evidence="1">Co-chaperone protein HscB homolog</fullName>
    </recommendedName>
</protein>
<sequence length="175" mass="19703">MNHDFNQDFFSLFGLPRRFAIDAAGLDAAWRAAAAQVHPDRYAASSDADKRSALMLATRVNEGYQTLKSPLNRARYLLQLSGVDTQEENNTRMPADFLMAQMEWRESIDDARADVDALESLSRRLRGEVRDLQTELEAALDARADLDAAAVLVRKLRFMEKLDQEIGDAIESLLD</sequence>
<accession>Q7NZ31</accession>
<organism>
    <name type="scientific">Chromobacterium violaceum (strain ATCC 12472 / DSM 30191 / JCM 1249 / CCUG 213 / NBRC 12614 / NCIMB 9131 / NCTC 9757 / MK)</name>
    <dbReference type="NCBI Taxonomy" id="243365"/>
    <lineage>
        <taxon>Bacteria</taxon>
        <taxon>Pseudomonadati</taxon>
        <taxon>Pseudomonadota</taxon>
        <taxon>Betaproteobacteria</taxon>
        <taxon>Neisseriales</taxon>
        <taxon>Chromobacteriaceae</taxon>
        <taxon>Chromobacterium</taxon>
    </lineage>
</organism>
<proteinExistence type="inferred from homology"/>
<name>HSCB_CHRVO</name>
<keyword id="KW-0143">Chaperone</keyword>
<keyword id="KW-1185">Reference proteome</keyword>